<organism>
    <name type="scientific">Equus caballus</name>
    <name type="common">Horse</name>
    <dbReference type="NCBI Taxonomy" id="9796"/>
    <lineage>
        <taxon>Eukaryota</taxon>
        <taxon>Metazoa</taxon>
        <taxon>Chordata</taxon>
        <taxon>Craniata</taxon>
        <taxon>Vertebrata</taxon>
        <taxon>Euteleostomi</taxon>
        <taxon>Mammalia</taxon>
        <taxon>Eutheria</taxon>
        <taxon>Laurasiatheria</taxon>
        <taxon>Perissodactyla</taxon>
        <taxon>Equidae</taxon>
        <taxon>Equus</taxon>
    </lineage>
</organism>
<protein>
    <recommendedName>
        <fullName>Myosin-7</fullName>
    </recommendedName>
    <alternativeName>
        <fullName>Myosin heavy chain 7</fullName>
    </alternativeName>
    <alternativeName>
        <fullName>Myosin heavy chain slow isoform</fullName>
        <shortName>MyHC-slow</shortName>
    </alternativeName>
    <alternativeName>
        <fullName>Myosin heavy chain, cardiac muscle beta isoform</fullName>
        <shortName>MyHC-beta</shortName>
    </alternativeName>
</protein>
<keyword id="KW-0009">Actin-binding</keyword>
<keyword id="KW-0067">ATP-binding</keyword>
<keyword id="KW-0112">Calmodulin-binding</keyword>
<keyword id="KW-0175">Coiled coil</keyword>
<keyword id="KW-0963">Cytoplasm</keyword>
<keyword id="KW-0488">Methylation</keyword>
<keyword id="KW-0505">Motor protein</keyword>
<keyword id="KW-0514">Muscle protein</keyword>
<keyword id="KW-0518">Myosin</keyword>
<keyword id="KW-0547">Nucleotide-binding</keyword>
<keyword id="KW-0597">Phosphoprotein</keyword>
<keyword id="KW-1185">Reference proteome</keyword>
<keyword id="KW-0787">Thick filament</keyword>
<evidence type="ECO:0000250" key="1"/>
<evidence type="ECO:0000250" key="2">
    <source>
        <dbReference type="UniProtKB" id="P02563"/>
    </source>
</evidence>
<evidence type="ECO:0000250" key="3">
    <source>
        <dbReference type="UniProtKB" id="P02564"/>
    </source>
</evidence>
<evidence type="ECO:0000250" key="4">
    <source>
        <dbReference type="UniProtKB" id="P12883"/>
    </source>
</evidence>
<evidence type="ECO:0000250" key="5">
    <source>
        <dbReference type="UniProtKB" id="Q02566"/>
    </source>
</evidence>
<evidence type="ECO:0000255" key="6"/>
<evidence type="ECO:0000255" key="7">
    <source>
        <dbReference type="PROSITE-ProRule" id="PRU00116"/>
    </source>
</evidence>
<evidence type="ECO:0000255" key="8">
    <source>
        <dbReference type="PROSITE-ProRule" id="PRU00782"/>
    </source>
</evidence>
<evidence type="ECO:0000255" key="9">
    <source>
        <dbReference type="PROSITE-ProRule" id="PRU01190"/>
    </source>
</evidence>
<evidence type="ECO:0000256" key="10">
    <source>
        <dbReference type="SAM" id="MobiDB-lite"/>
    </source>
</evidence>
<evidence type="ECO:0000305" key="11"/>
<feature type="chain" id="PRO_0000274176" description="Myosin-7">
    <location>
        <begin position="1"/>
        <end position="1935"/>
    </location>
</feature>
<feature type="domain" description="Myosin N-terminal SH3-like" evidence="9">
    <location>
        <begin position="32"/>
        <end position="81"/>
    </location>
</feature>
<feature type="domain" description="Myosin motor" evidence="8">
    <location>
        <begin position="85"/>
        <end position="778"/>
    </location>
</feature>
<feature type="domain" description="IQ" evidence="7">
    <location>
        <begin position="781"/>
        <end position="810"/>
    </location>
</feature>
<feature type="region of interest" description="Actin-binding" evidence="1">
    <location>
        <begin position="655"/>
        <end position="677"/>
    </location>
</feature>
<feature type="region of interest" description="Actin-binding" evidence="1">
    <location>
        <begin position="757"/>
        <end position="771"/>
    </location>
</feature>
<feature type="region of interest" description="Disordered" evidence="10">
    <location>
        <begin position="1907"/>
        <end position="1935"/>
    </location>
</feature>
<feature type="coiled-coil region" evidence="6">
    <location>
        <begin position="839"/>
        <end position="1935"/>
    </location>
</feature>
<feature type="compositionally biased region" description="Basic and acidic residues" evidence="10">
    <location>
        <begin position="1923"/>
        <end position="1935"/>
    </location>
</feature>
<feature type="binding site" evidence="1">
    <location>
        <begin position="178"/>
        <end position="185"/>
    </location>
    <ligand>
        <name>ATP</name>
        <dbReference type="ChEBI" id="CHEBI:30616"/>
    </ligand>
</feature>
<feature type="modified residue" description="N6,N6,N6-trimethyllysine" evidence="6">
    <location>
        <position position="129"/>
    </location>
</feature>
<feature type="modified residue" description="Phosphothreonine" evidence="2">
    <location>
        <position position="378"/>
    </location>
</feature>
<feature type="modified residue" description="Phosphoserine" evidence="2">
    <location>
        <position position="1137"/>
    </location>
</feature>
<feature type="modified residue" description="Phosphoserine" evidence="5">
    <location>
        <position position="1269"/>
    </location>
</feature>
<feature type="modified residue" description="Phosphothreonine" evidence="2">
    <location>
        <position position="1282"/>
    </location>
</feature>
<feature type="modified residue" description="Phosphotyrosine" evidence="2">
    <location>
        <position position="1308"/>
    </location>
</feature>
<feature type="modified residue" description="Phosphothreonine" evidence="2">
    <location>
        <position position="1309"/>
    </location>
</feature>
<feature type="modified residue" description="Phosphoserine" evidence="3">
    <location>
        <position position="1510"/>
    </location>
</feature>
<feature type="modified residue" description="Phosphothreonine" evidence="2">
    <location>
        <position position="1513"/>
    </location>
</feature>
<reference key="1">
    <citation type="submission" date="2002-07" db="EMBL/GenBank/DDBJ databases">
        <title>Sequencing of the horse myosin heavy chain isoforms.</title>
        <authorList>
            <person name="Chikuni K."/>
            <person name="Nakajima I."/>
            <person name="Muroya S."/>
        </authorList>
    </citation>
    <scope>NUCLEOTIDE SEQUENCE [MRNA]</scope>
    <source>
        <strain>Thoroughbred</strain>
        <tissue>Skeletal muscle</tissue>
    </source>
</reference>
<dbReference type="EMBL" id="AB088367">
    <property type="protein sequence ID" value="BAC05681.1"/>
    <property type="molecule type" value="mRNA"/>
</dbReference>
<dbReference type="RefSeq" id="NP_001075227.1">
    <property type="nucleotide sequence ID" value="NM_001081758.1"/>
</dbReference>
<dbReference type="SMR" id="Q8MJU9"/>
<dbReference type="FunCoup" id="Q8MJU9">
    <property type="interactions" value="120"/>
</dbReference>
<dbReference type="STRING" id="9796.ENSECAP00000049644"/>
<dbReference type="GeneID" id="791234"/>
<dbReference type="KEGG" id="ecb:791234"/>
<dbReference type="CTD" id="4625"/>
<dbReference type="InParanoid" id="Q8MJU9"/>
<dbReference type="OrthoDB" id="312459at2759"/>
<dbReference type="Proteomes" id="UP000002281">
    <property type="component" value="Unplaced"/>
</dbReference>
<dbReference type="GO" id="GO:0005737">
    <property type="term" value="C:cytoplasm"/>
    <property type="evidence" value="ECO:0000318"/>
    <property type="project" value="GO_Central"/>
</dbReference>
<dbReference type="GO" id="GO:0030016">
    <property type="term" value="C:myofibril"/>
    <property type="evidence" value="ECO:0000250"/>
    <property type="project" value="UniProtKB"/>
</dbReference>
<dbReference type="GO" id="GO:0032982">
    <property type="term" value="C:myosin filament"/>
    <property type="evidence" value="ECO:0000250"/>
    <property type="project" value="UniProtKB"/>
</dbReference>
<dbReference type="GO" id="GO:0016460">
    <property type="term" value="C:myosin II complex"/>
    <property type="evidence" value="ECO:0000318"/>
    <property type="project" value="GO_Central"/>
</dbReference>
<dbReference type="GO" id="GO:0030017">
    <property type="term" value="C:sarcomere"/>
    <property type="evidence" value="ECO:0000250"/>
    <property type="project" value="UniProtKB"/>
</dbReference>
<dbReference type="GO" id="GO:0051015">
    <property type="term" value="F:actin filament binding"/>
    <property type="evidence" value="ECO:0000318"/>
    <property type="project" value="GO_Central"/>
</dbReference>
<dbReference type="GO" id="GO:0005524">
    <property type="term" value="F:ATP binding"/>
    <property type="evidence" value="ECO:0007669"/>
    <property type="project" value="UniProtKB-KW"/>
</dbReference>
<dbReference type="GO" id="GO:0005516">
    <property type="term" value="F:calmodulin binding"/>
    <property type="evidence" value="ECO:0007669"/>
    <property type="project" value="UniProtKB-KW"/>
</dbReference>
<dbReference type="GO" id="GO:0000146">
    <property type="term" value="F:microfilament motor activity"/>
    <property type="evidence" value="ECO:0000318"/>
    <property type="project" value="GO_Central"/>
</dbReference>
<dbReference type="GO" id="GO:0007512">
    <property type="term" value="P:adult heart development"/>
    <property type="evidence" value="ECO:0000318"/>
    <property type="project" value="GO_Central"/>
</dbReference>
<dbReference type="GO" id="GO:0060048">
    <property type="term" value="P:cardiac muscle contraction"/>
    <property type="evidence" value="ECO:0000318"/>
    <property type="project" value="GO_Central"/>
</dbReference>
<dbReference type="GO" id="GO:0030049">
    <property type="term" value="P:muscle filament sliding"/>
    <property type="evidence" value="ECO:0000318"/>
    <property type="project" value="GO_Central"/>
</dbReference>
<dbReference type="CDD" id="cd01377">
    <property type="entry name" value="MYSc_class_II"/>
    <property type="match status" value="1"/>
</dbReference>
<dbReference type="FunFam" id="1.10.10.820:FF:000001">
    <property type="entry name" value="Myosin heavy chain"/>
    <property type="match status" value="1"/>
</dbReference>
<dbReference type="FunFam" id="1.20.5.340:FF:000002">
    <property type="entry name" value="Myosin heavy chain"/>
    <property type="match status" value="1"/>
</dbReference>
<dbReference type="FunFam" id="1.20.5.340:FF:000003">
    <property type="entry name" value="Myosin heavy chain"/>
    <property type="match status" value="1"/>
</dbReference>
<dbReference type="FunFam" id="1.20.5.340:FF:000004">
    <property type="entry name" value="Myosin heavy chain"/>
    <property type="match status" value="1"/>
</dbReference>
<dbReference type="FunFam" id="1.20.5.340:FF:000006">
    <property type="entry name" value="Myosin heavy chain"/>
    <property type="match status" value="1"/>
</dbReference>
<dbReference type="FunFam" id="1.20.5.340:FF:000013">
    <property type="entry name" value="Myosin heavy chain"/>
    <property type="match status" value="1"/>
</dbReference>
<dbReference type="FunFam" id="1.20.5.370:FF:000001">
    <property type="entry name" value="Myosin heavy chain"/>
    <property type="match status" value="1"/>
</dbReference>
<dbReference type="FunFam" id="1.20.5.370:FF:000002">
    <property type="entry name" value="Myosin heavy chain"/>
    <property type="match status" value="1"/>
</dbReference>
<dbReference type="FunFam" id="1.20.5.370:FF:000003">
    <property type="entry name" value="Myosin heavy chain"/>
    <property type="match status" value="1"/>
</dbReference>
<dbReference type="FunFam" id="1.20.5.370:FF:000007">
    <property type="entry name" value="Myosin heavy chain"/>
    <property type="match status" value="1"/>
</dbReference>
<dbReference type="FunFam" id="1.20.5.370:FF:000008">
    <property type="entry name" value="Myosin heavy chain"/>
    <property type="match status" value="1"/>
</dbReference>
<dbReference type="FunFam" id="1.20.5.4820:FF:000001">
    <property type="entry name" value="Myosin heavy chain"/>
    <property type="match status" value="1"/>
</dbReference>
<dbReference type="FunFam" id="1.20.58.530:FF:000001">
    <property type="entry name" value="Myosin heavy chain"/>
    <property type="match status" value="1"/>
</dbReference>
<dbReference type="FunFam" id="2.30.30.360:FF:000001">
    <property type="entry name" value="Myosin heavy chain"/>
    <property type="match status" value="1"/>
</dbReference>
<dbReference type="FunFam" id="3.40.850.10:FF:000024">
    <property type="entry name" value="Myosin heavy chain, isoform J"/>
    <property type="match status" value="1"/>
</dbReference>
<dbReference type="FunFam" id="1.20.120.720:FF:000001">
    <property type="entry name" value="Myosin heavy chain, muscle"/>
    <property type="match status" value="1"/>
</dbReference>
<dbReference type="Gene3D" id="1.10.10.820">
    <property type="match status" value="1"/>
</dbReference>
<dbReference type="Gene3D" id="1.20.5.340">
    <property type="match status" value="5"/>
</dbReference>
<dbReference type="Gene3D" id="1.20.5.370">
    <property type="match status" value="4"/>
</dbReference>
<dbReference type="Gene3D" id="1.20.5.4820">
    <property type="match status" value="1"/>
</dbReference>
<dbReference type="Gene3D" id="1.20.58.530">
    <property type="match status" value="1"/>
</dbReference>
<dbReference type="Gene3D" id="6.10.250.2420">
    <property type="match status" value="1"/>
</dbReference>
<dbReference type="Gene3D" id="3.40.850.10">
    <property type="entry name" value="Kinesin motor domain"/>
    <property type="match status" value="1"/>
</dbReference>
<dbReference type="Gene3D" id="2.30.30.360">
    <property type="entry name" value="Myosin S1 fragment, N-terminal"/>
    <property type="match status" value="1"/>
</dbReference>
<dbReference type="Gene3D" id="1.20.120.720">
    <property type="entry name" value="Myosin VI head, motor domain, U50 subdomain"/>
    <property type="match status" value="1"/>
</dbReference>
<dbReference type="InterPro" id="IPR000048">
    <property type="entry name" value="IQ_motif_EF-hand-BS"/>
</dbReference>
<dbReference type="InterPro" id="IPR036961">
    <property type="entry name" value="Kinesin_motor_dom_sf"/>
</dbReference>
<dbReference type="InterPro" id="IPR001609">
    <property type="entry name" value="Myosin_head_motor_dom-like"/>
</dbReference>
<dbReference type="InterPro" id="IPR004009">
    <property type="entry name" value="Myosin_N"/>
</dbReference>
<dbReference type="InterPro" id="IPR008989">
    <property type="entry name" value="Myosin_S1_N"/>
</dbReference>
<dbReference type="InterPro" id="IPR002928">
    <property type="entry name" value="Myosin_tail"/>
</dbReference>
<dbReference type="InterPro" id="IPR027417">
    <property type="entry name" value="P-loop_NTPase"/>
</dbReference>
<dbReference type="InterPro" id="IPR014751">
    <property type="entry name" value="XRCC4-like_C"/>
</dbReference>
<dbReference type="PANTHER" id="PTHR45615">
    <property type="entry name" value="MYOSIN HEAVY CHAIN, NON-MUSCLE"/>
    <property type="match status" value="1"/>
</dbReference>
<dbReference type="PANTHER" id="PTHR45615:SF1">
    <property type="entry name" value="MYOSIN-7"/>
    <property type="match status" value="1"/>
</dbReference>
<dbReference type="Pfam" id="PF00063">
    <property type="entry name" value="Myosin_head"/>
    <property type="match status" value="1"/>
</dbReference>
<dbReference type="Pfam" id="PF02736">
    <property type="entry name" value="Myosin_N"/>
    <property type="match status" value="1"/>
</dbReference>
<dbReference type="Pfam" id="PF01576">
    <property type="entry name" value="Myosin_tail_1"/>
    <property type="match status" value="1"/>
</dbReference>
<dbReference type="PRINTS" id="PR00193">
    <property type="entry name" value="MYOSINHEAVY"/>
</dbReference>
<dbReference type="SMART" id="SM00015">
    <property type="entry name" value="IQ"/>
    <property type="match status" value="1"/>
</dbReference>
<dbReference type="SMART" id="SM00242">
    <property type="entry name" value="MYSc"/>
    <property type="match status" value="1"/>
</dbReference>
<dbReference type="SUPFAM" id="SSF90257">
    <property type="entry name" value="Myosin rod fragments"/>
    <property type="match status" value="4"/>
</dbReference>
<dbReference type="SUPFAM" id="SSF52540">
    <property type="entry name" value="P-loop containing nucleoside triphosphate hydrolases"/>
    <property type="match status" value="1"/>
</dbReference>
<dbReference type="PROSITE" id="PS50096">
    <property type="entry name" value="IQ"/>
    <property type="match status" value="1"/>
</dbReference>
<dbReference type="PROSITE" id="PS51456">
    <property type="entry name" value="MYOSIN_MOTOR"/>
    <property type="match status" value="1"/>
</dbReference>
<dbReference type="PROSITE" id="PS51844">
    <property type="entry name" value="SH3_LIKE"/>
    <property type="match status" value="1"/>
</dbReference>
<gene>
    <name type="primary">MYH7</name>
</gene>
<proteinExistence type="evidence at transcript level"/>
<sequence>MGDAELAVFGSAAPYLRKTEKERLEDQTRPFDLKKDVFVPDDKEEFVKAKIISREGGKITAETEHGKTVTVKEDQVLQQNPPKFDKIEDMAMLTFLHEPAVLYNLKDRYAAWMIYTYSGLFCVTINPYKWLPVYTAEVVAAYRGKKRSEAPPHIFSISDNAYQYMLTDRENQSILITGESGAGKTVNTKRVIQYFAVIAAIGDRSKKDQTSGKGTLEDQIIEANPALEAFGNAKTVRNDNSSRFGKFIRIHFGATGKLASADIETYLLEKSRVIFQLKAERDYHIFYQILSNKKPELLDMLLITNNPYDYAFISQGETTVASIDDAEELMATDNAFDVLGFTSEEKNSMYKLTGAIMHFGNMKFKQKQREEQAEPDGTEEADKSAYLMGLNSADLLKGLCHPRVKVGNEYVTKGQNVQQVAYAKGALAKAVYERMFNWMVARINATLETKQPRQYFIGVLDIAGFEIFDFNSFEQLCINFTNEKLQQFFNHHMFVLEQEEYKKEGIEWEFIDFGMDLQACIDLIEKPMGIMSILEEECMFPKATDMTFKAKLFDNHLGKSSNFQKPRNIKGKPEAHFSLIHYAGTVDYNILGWLQKNKDPLNETVVDLYKKSSLKMLSNLFANYLGADAPIEKGKGKAKKGSSFQTVSALHRENLNKLMTNLRSTHPHFVRCIIPNETKSPGVIDNPLVMHQLRCNGVLEGIRICRKGFPNRILYGDFRQRYRILNPAAIPEGQFIDSRKGAEKLLSSLDIDHNQYRFGHTKVFFKAGLLGLLEEMRDERLSRIITRIQAQSRGVLARMEFKKLLERRDSLLIIQWNIRAFMGVKNWPWMKLYFKIKPLLKSAETEKEMATMKEEFARLKEALEKSEARRKELEEKMVSLLQEKNDLQLQVQAEQDNLADAEERCDQLIKNKIQLEAKVKEMTERLEDEEEMNAELTAKKRKLEDECSELKRDIDDLELTLAKVEKEKHATENKVKNLTEEMAGLDEIIAKLTKEKKALQEAHQQALDDLQAEEDKVNTLTKAKVKLEQHVDDLEGSLEQEKKVRMDLERAKRKLEGDLKLTQESIMDLENDKQQLDERLKKKDFELNALNARIEDEQALGSQLQKKLKELQARIEELEEELEAERTARAKVEKLRSDLSRELEEISERLEEAGGATSVQIEMNKKREAEFQKMKRDLEEATLQHEATAAALRKKHADSVAELGEQIDNLQRVKQKLEKEKSEFKLELDDVTSNMEQIIKAKANLEKMCRTLEDQMNEHRSKAEETQRSVNDLTSQRAKLQTENGELSRQLDEKEALISQLTRGKLTYTQQLEDLKRQLEEEVKAKNALAHALQSARHDCDLLREQYEEETEAKAELQRVLSKANSEVAQWRTKYETDAIQRTEELEEAKKKLAQRLQDAEEAVEAVNAKCSSLEKTKHRLQNEIEDLMVDVERSNAAAAALDKKQRNFDKILAEWKQKYEESQSELESSQKEARSLSTELFKLKNAYEESLEHLETFKRENKNLQEEISDLTEQLGSSGKTIHELEKVRKQLEAEKLELQSALEEAEASLEHEEGKILRAQLEFNQIKAEIERKLAEKDEEMEQAKRNHLRVVDSLQTSLDAETRSRNEALRVKKKMEGDLNEMEIQLSHANRMAAEAQKQVKSLQSLLKDTQIQLDDAVRANDDLKENIAIVERRNNLLQAELEELRAVVEQTERSRKLAEQELIETSERVQLLHSQNTSLINQKKKMDADLSQLQTEVEEAVQECRDAEEKAKKAITDAAMMAEELKKEQDTSAHLERMKKNMEQTIKDLQHRLDEAEQIALKGGKKQLQKLEARVRELENELEVEQKRNAESIKGMRKSERRIKELTYQTEEDRKNLLRLQDLVDKLQLKVKAYKRQAEEAEEQANTNLSKFRKVQHELDEAEERADIAESQVNKLRAKSRDIGTKGLNEE</sequence>
<comment type="function">
    <text evidence="4">Myosins are actin-based motor molecules with ATPase activity essential for muscle contraction. Forms regular bipolar thick filaments that, together with actin thin filaments, constitute the fundamental contractile unit of skeletal and cardiac muscle.</text>
</comment>
<comment type="subunit">
    <text evidence="4">Muscle myosin is a hexameric protein that consists of 2 heavy chain subunits (MHC), 2 alkali light chain subunits (MLC) and 2 regulatory light chain subunits (MLC-2). Interacts with ECPAS. Interacts (via C-terminus) with LRRC39.</text>
</comment>
<comment type="subcellular location">
    <subcellularLocation>
        <location evidence="3">Cytoplasm</location>
        <location evidence="3">Myofibril</location>
    </subcellularLocation>
    <subcellularLocation>
        <location evidence="3">Cytoplasm</location>
        <location evidence="3">Myofibril</location>
        <location evidence="3">Sarcomere</location>
    </subcellularLocation>
    <text evidence="3">Thick filaments of the myofibrils.</text>
</comment>
<comment type="domain">
    <text evidence="11">Limited proteolysis of myosin heavy chain produces 1 light meromyosin (LMM) and 1 heavy meromyosin (HMM). HMM can be further cleaved into 2 globular subfragments (S1) and 1 rod-shaped subfragment (S2).</text>
</comment>
<comment type="domain">
    <text evidence="4">The rodlike tail sequence is highly repetitive, showing cycles of a 28-residue repeat pattern composed of 4 heptapeptides, characteristic for alpha-helical coiled coils. Four skip residues (Skip1: Thr-1188, Skip2: Glu-1385, Skip3: Glu-1582 and Skip4: Gly-1807) introduce discontinuities in the coiled-coil heptad repeats. The first three skip residues are structurally comparable and induce a unique local relaxation of the coiled-coil superhelical pitch and the fourth skip residue lies within a highly flexible molecular hinge that is necessary for myosin incorporation in the bare zone of sarcomeres.</text>
</comment>
<comment type="miscellaneous">
    <text>The cardiac alpha isoform is a 'fast' ATPase myosin, while the beta isoform is a 'slow' ATPase.</text>
</comment>
<comment type="similarity">
    <text evidence="11">Belongs to the TRAFAC class myosin-kinesin ATPase superfamily. Myosin family.</text>
</comment>
<comment type="caution">
    <text evidence="11">Represents a conventional myosin. This protein should not be confused with the unconventional myosin-7 (MYO7).</text>
</comment>
<accession>Q8MJU9</accession>
<name>MYH7_HORSE</name>